<proteinExistence type="inferred from homology"/>
<reference key="1">
    <citation type="journal article" date="2006" name="Proc. Natl. Acad. Sci. U.S.A.">
        <title>The complete genome sequence of a chronic atrophic gastritis Helicobacter pylori strain: evolution during disease progression.</title>
        <authorList>
            <person name="Oh J.D."/>
            <person name="Kling-Baeckhed H."/>
            <person name="Giannakis M."/>
            <person name="Xu J."/>
            <person name="Fulton R.S."/>
            <person name="Fulton L.A."/>
            <person name="Cordum H.S."/>
            <person name="Wang C."/>
            <person name="Elliott G."/>
            <person name="Edwards J."/>
            <person name="Mardis E.R."/>
            <person name="Engstrand L.G."/>
            <person name="Gordon J.I."/>
        </authorList>
    </citation>
    <scope>NUCLEOTIDE SEQUENCE [LARGE SCALE GENOMIC DNA]</scope>
    <source>
        <strain>HPAG1</strain>
    </source>
</reference>
<protein>
    <recommendedName>
        <fullName evidence="1">Biotin synthase</fullName>
        <ecNumber evidence="1">2.8.1.6</ecNumber>
    </recommendedName>
</protein>
<evidence type="ECO:0000255" key="1">
    <source>
        <dbReference type="HAMAP-Rule" id="MF_01694"/>
    </source>
</evidence>
<evidence type="ECO:0000255" key="2">
    <source>
        <dbReference type="PROSITE-ProRule" id="PRU01266"/>
    </source>
</evidence>
<gene>
    <name evidence="1" type="primary">bioB</name>
    <name type="ordered locus">HPAG1_1330</name>
</gene>
<name>BIOB_HELPH</name>
<accession>Q1CRM5</accession>
<dbReference type="EC" id="2.8.1.6" evidence="1"/>
<dbReference type="EMBL" id="CP000241">
    <property type="protein sequence ID" value="ABF85397.1"/>
    <property type="molecule type" value="Genomic_DNA"/>
</dbReference>
<dbReference type="RefSeq" id="WP_001155622.1">
    <property type="nucleotide sequence ID" value="NC_008086.1"/>
</dbReference>
<dbReference type="SMR" id="Q1CRM5"/>
<dbReference type="KEGG" id="hpa:HPAG1_1330"/>
<dbReference type="HOGENOM" id="CLU_033172_2_1_7"/>
<dbReference type="UniPathway" id="UPA00078">
    <property type="reaction ID" value="UER00162"/>
</dbReference>
<dbReference type="GO" id="GO:0051537">
    <property type="term" value="F:2 iron, 2 sulfur cluster binding"/>
    <property type="evidence" value="ECO:0007669"/>
    <property type="project" value="UniProtKB-KW"/>
</dbReference>
<dbReference type="GO" id="GO:0051539">
    <property type="term" value="F:4 iron, 4 sulfur cluster binding"/>
    <property type="evidence" value="ECO:0007669"/>
    <property type="project" value="UniProtKB-KW"/>
</dbReference>
<dbReference type="GO" id="GO:0004076">
    <property type="term" value="F:biotin synthase activity"/>
    <property type="evidence" value="ECO:0007669"/>
    <property type="project" value="UniProtKB-UniRule"/>
</dbReference>
<dbReference type="GO" id="GO:0005506">
    <property type="term" value="F:iron ion binding"/>
    <property type="evidence" value="ECO:0007669"/>
    <property type="project" value="UniProtKB-UniRule"/>
</dbReference>
<dbReference type="GO" id="GO:0009102">
    <property type="term" value="P:biotin biosynthetic process"/>
    <property type="evidence" value="ECO:0007669"/>
    <property type="project" value="UniProtKB-UniRule"/>
</dbReference>
<dbReference type="CDD" id="cd01335">
    <property type="entry name" value="Radical_SAM"/>
    <property type="match status" value="1"/>
</dbReference>
<dbReference type="FunFam" id="3.20.20.70:FF:000158">
    <property type="entry name" value="Biotin synthase"/>
    <property type="match status" value="1"/>
</dbReference>
<dbReference type="Gene3D" id="3.20.20.70">
    <property type="entry name" value="Aldolase class I"/>
    <property type="match status" value="1"/>
</dbReference>
<dbReference type="HAMAP" id="MF_01694">
    <property type="entry name" value="BioB"/>
    <property type="match status" value="1"/>
</dbReference>
<dbReference type="InterPro" id="IPR013785">
    <property type="entry name" value="Aldolase_TIM"/>
</dbReference>
<dbReference type="InterPro" id="IPR010722">
    <property type="entry name" value="BATS_dom"/>
</dbReference>
<dbReference type="InterPro" id="IPR002684">
    <property type="entry name" value="Biotin_synth/BioAB"/>
</dbReference>
<dbReference type="InterPro" id="IPR024177">
    <property type="entry name" value="Biotin_synthase"/>
</dbReference>
<dbReference type="InterPro" id="IPR006638">
    <property type="entry name" value="Elp3/MiaA/NifB-like_rSAM"/>
</dbReference>
<dbReference type="InterPro" id="IPR007197">
    <property type="entry name" value="rSAM"/>
</dbReference>
<dbReference type="NCBIfam" id="TIGR00433">
    <property type="entry name" value="bioB"/>
    <property type="match status" value="1"/>
</dbReference>
<dbReference type="NCBIfam" id="NF006308">
    <property type="entry name" value="PRK08508.1"/>
    <property type="match status" value="1"/>
</dbReference>
<dbReference type="PANTHER" id="PTHR22976">
    <property type="entry name" value="BIOTIN SYNTHASE"/>
    <property type="match status" value="1"/>
</dbReference>
<dbReference type="PANTHER" id="PTHR22976:SF2">
    <property type="entry name" value="BIOTIN SYNTHASE, MITOCHONDRIAL"/>
    <property type="match status" value="1"/>
</dbReference>
<dbReference type="Pfam" id="PF06968">
    <property type="entry name" value="BATS"/>
    <property type="match status" value="1"/>
</dbReference>
<dbReference type="Pfam" id="PF04055">
    <property type="entry name" value="Radical_SAM"/>
    <property type="match status" value="1"/>
</dbReference>
<dbReference type="PIRSF" id="PIRSF001619">
    <property type="entry name" value="Biotin_synth"/>
    <property type="match status" value="1"/>
</dbReference>
<dbReference type="SFLD" id="SFLDG01278">
    <property type="entry name" value="biotin_synthase_like"/>
    <property type="match status" value="1"/>
</dbReference>
<dbReference type="SFLD" id="SFLDS00029">
    <property type="entry name" value="Radical_SAM"/>
    <property type="match status" value="1"/>
</dbReference>
<dbReference type="SMART" id="SM00876">
    <property type="entry name" value="BATS"/>
    <property type="match status" value="1"/>
</dbReference>
<dbReference type="SMART" id="SM00729">
    <property type="entry name" value="Elp3"/>
    <property type="match status" value="1"/>
</dbReference>
<dbReference type="SUPFAM" id="SSF102114">
    <property type="entry name" value="Radical SAM enzymes"/>
    <property type="match status" value="1"/>
</dbReference>
<dbReference type="PROSITE" id="PS51918">
    <property type="entry name" value="RADICAL_SAM"/>
    <property type="match status" value="1"/>
</dbReference>
<organism>
    <name type="scientific">Helicobacter pylori (strain HPAG1)</name>
    <dbReference type="NCBI Taxonomy" id="357544"/>
    <lineage>
        <taxon>Bacteria</taxon>
        <taxon>Pseudomonadati</taxon>
        <taxon>Campylobacterota</taxon>
        <taxon>Epsilonproteobacteria</taxon>
        <taxon>Campylobacterales</taxon>
        <taxon>Helicobacteraceae</taxon>
        <taxon>Helicobacter</taxon>
    </lineage>
</organism>
<sequence length="282" mass="31476">MQEIFLCSISNVRSGDCKEDCAYCTQSSHHQGAIKRYKFKDEKVVLQEARALRELGALGFCLVTSGRELDDEKCEYIAKLAKAINQEELGLHLIACCGRADLEQLEFLRDAGIHSYNHNLETSQNFFPKICSTHTWEERFITCENALRAGLGLCSGGIFGLNESWEDRIEMLRALASLSPHTTPINFFIKNPVLPIDAETLSADEALECVLLAKEFLPNARLMVAGGREVVFKDNDKKEAKLFEYGINAVVLGDYLTTKGKAPKKDIEKLLSYGLTMATSCH</sequence>
<comment type="function">
    <text evidence="1">Catalyzes the conversion of dethiobiotin (DTB) to biotin by the insertion of a sulfur atom into dethiobiotin via a radical-based mechanism.</text>
</comment>
<comment type="catalytic activity">
    <reaction evidence="1">
        <text>(4R,5S)-dethiobiotin + (sulfur carrier)-SH + 2 reduced [2Fe-2S]-[ferredoxin] + 2 S-adenosyl-L-methionine = (sulfur carrier)-H + biotin + 2 5'-deoxyadenosine + 2 L-methionine + 2 oxidized [2Fe-2S]-[ferredoxin]</text>
        <dbReference type="Rhea" id="RHEA:22060"/>
        <dbReference type="Rhea" id="RHEA-COMP:10000"/>
        <dbReference type="Rhea" id="RHEA-COMP:10001"/>
        <dbReference type="Rhea" id="RHEA-COMP:14737"/>
        <dbReference type="Rhea" id="RHEA-COMP:14739"/>
        <dbReference type="ChEBI" id="CHEBI:17319"/>
        <dbReference type="ChEBI" id="CHEBI:29917"/>
        <dbReference type="ChEBI" id="CHEBI:33737"/>
        <dbReference type="ChEBI" id="CHEBI:33738"/>
        <dbReference type="ChEBI" id="CHEBI:57586"/>
        <dbReference type="ChEBI" id="CHEBI:57844"/>
        <dbReference type="ChEBI" id="CHEBI:59789"/>
        <dbReference type="ChEBI" id="CHEBI:64428"/>
        <dbReference type="ChEBI" id="CHEBI:149473"/>
        <dbReference type="EC" id="2.8.1.6"/>
    </reaction>
</comment>
<comment type="cofactor">
    <cofactor evidence="1">
        <name>[4Fe-4S] cluster</name>
        <dbReference type="ChEBI" id="CHEBI:49883"/>
    </cofactor>
    <text evidence="1">Binds 1 [4Fe-4S] cluster. The cluster is coordinated with 3 cysteines and an exchangeable S-adenosyl-L-methionine.</text>
</comment>
<comment type="cofactor">
    <cofactor evidence="1">
        <name>[2Fe-2S] cluster</name>
        <dbReference type="ChEBI" id="CHEBI:190135"/>
    </cofactor>
    <text evidence="1">Binds 1 [2Fe-2S] cluster. The cluster is coordinated with 3 cysteines and 1 arginine.</text>
</comment>
<comment type="pathway">
    <text evidence="1">Cofactor biosynthesis; biotin biosynthesis; biotin from 7,8-diaminononanoate: step 2/2.</text>
</comment>
<comment type="subunit">
    <text evidence="1">Homodimer.</text>
</comment>
<comment type="similarity">
    <text evidence="1">Belongs to the radical SAM superfamily. Biotin synthase family.</text>
</comment>
<feature type="chain" id="PRO_0000381427" description="Biotin synthase">
    <location>
        <begin position="1"/>
        <end position="282"/>
    </location>
</feature>
<feature type="domain" description="Radical SAM core" evidence="2">
    <location>
        <begin position="1"/>
        <end position="228"/>
    </location>
</feature>
<feature type="binding site" evidence="1">
    <location>
        <position position="17"/>
    </location>
    <ligand>
        <name>[4Fe-4S] cluster</name>
        <dbReference type="ChEBI" id="CHEBI:49883"/>
        <note>4Fe-4S-S-AdoMet</note>
    </ligand>
</feature>
<feature type="binding site" evidence="1">
    <location>
        <position position="21"/>
    </location>
    <ligand>
        <name>[4Fe-4S] cluster</name>
        <dbReference type="ChEBI" id="CHEBI:49883"/>
        <note>4Fe-4S-S-AdoMet</note>
    </ligand>
</feature>
<feature type="binding site" evidence="1">
    <location>
        <position position="24"/>
    </location>
    <ligand>
        <name>[4Fe-4S] cluster</name>
        <dbReference type="ChEBI" id="CHEBI:49883"/>
        <note>4Fe-4S-S-AdoMet</note>
    </ligand>
</feature>
<feature type="binding site" evidence="1">
    <location>
        <position position="61"/>
    </location>
    <ligand>
        <name>[2Fe-2S] cluster</name>
        <dbReference type="ChEBI" id="CHEBI:190135"/>
    </ligand>
</feature>
<feature type="binding site" evidence="1">
    <location>
        <position position="96"/>
    </location>
    <ligand>
        <name>[2Fe-2S] cluster</name>
        <dbReference type="ChEBI" id="CHEBI:190135"/>
    </ligand>
</feature>
<feature type="binding site" evidence="1">
    <location>
        <position position="154"/>
    </location>
    <ligand>
        <name>[2Fe-2S] cluster</name>
        <dbReference type="ChEBI" id="CHEBI:190135"/>
    </ligand>
</feature>
<feature type="binding site" evidence="1">
    <location>
        <position position="221"/>
    </location>
    <ligand>
        <name>[2Fe-2S] cluster</name>
        <dbReference type="ChEBI" id="CHEBI:190135"/>
    </ligand>
</feature>
<keyword id="KW-0001">2Fe-2S</keyword>
<keyword id="KW-0004">4Fe-4S</keyword>
<keyword id="KW-0093">Biotin biosynthesis</keyword>
<keyword id="KW-0408">Iron</keyword>
<keyword id="KW-0411">Iron-sulfur</keyword>
<keyword id="KW-0479">Metal-binding</keyword>
<keyword id="KW-0949">S-adenosyl-L-methionine</keyword>
<keyword id="KW-0808">Transferase</keyword>